<accession>Q99UD0</accession>
<comment type="function">
    <text evidence="1">SbcCD cleaves DNA hairpin structures. These structures can inhibit DNA replication and are intermediates in certain DNA recombination reactions. The complex acts as a 3'-&gt;5' double strand exonuclease that can open hairpins. It also has a 5' single-strand endonuclease activity (By similarity).</text>
</comment>
<comment type="subunit">
    <text evidence="1">Heterodimer of SbcC and SbcD.</text>
</comment>
<comment type="similarity">
    <text evidence="3">Belongs to the SMC family. SbcC subfamily.</text>
</comment>
<gene>
    <name type="primary">sbcC</name>
    <name type="ordered locus">SAV1346</name>
</gene>
<dbReference type="EMBL" id="BA000017">
    <property type="protein sequence ID" value="BAB57508.1"/>
    <property type="molecule type" value="Genomic_DNA"/>
</dbReference>
<dbReference type="RefSeq" id="WP_000803135.1">
    <property type="nucleotide sequence ID" value="NC_002758.2"/>
</dbReference>
<dbReference type="SMR" id="Q99UD0"/>
<dbReference type="KEGG" id="sav:SAV1346"/>
<dbReference type="HOGENOM" id="CLU_004785_2_1_9"/>
<dbReference type="PhylomeDB" id="Q99UD0"/>
<dbReference type="Proteomes" id="UP000002481">
    <property type="component" value="Chromosome"/>
</dbReference>
<dbReference type="GO" id="GO:0005524">
    <property type="term" value="F:ATP binding"/>
    <property type="evidence" value="ECO:0007669"/>
    <property type="project" value="UniProtKB-KW"/>
</dbReference>
<dbReference type="GO" id="GO:0016887">
    <property type="term" value="F:ATP hydrolysis activity"/>
    <property type="evidence" value="ECO:0007669"/>
    <property type="project" value="InterPro"/>
</dbReference>
<dbReference type="GO" id="GO:0004519">
    <property type="term" value="F:endonuclease activity"/>
    <property type="evidence" value="ECO:0007669"/>
    <property type="project" value="UniProtKB-KW"/>
</dbReference>
<dbReference type="GO" id="GO:0004527">
    <property type="term" value="F:exonuclease activity"/>
    <property type="evidence" value="ECO:0007669"/>
    <property type="project" value="UniProtKB-KW"/>
</dbReference>
<dbReference type="GO" id="GO:0006310">
    <property type="term" value="P:DNA recombination"/>
    <property type="evidence" value="ECO:0007669"/>
    <property type="project" value="UniProtKB-KW"/>
</dbReference>
<dbReference type="GO" id="GO:0006260">
    <property type="term" value="P:DNA replication"/>
    <property type="evidence" value="ECO:0007669"/>
    <property type="project" value="UniProtKB-KW"/>
</dbReference>
<dbReference type="GO" id="GO:0006302">
    <property type="term" value="P:double-strand break repair"/>
    <property type="evidence" value="ECO:0007669"/>
    <property type="project" value="InterPro"/>
</dbReference>
<dbReference type="CDD" id="cd03279">
    <property type="entry name" value="ABC_sbcCD"/>
    <property type="match status" value="1"/>
</dbReference>
<dbReference type="Gene3D" id="3.40.50.300">
    <property type="entry name" value="P-loop containing nucleotide triphosphate hydrolases"/>
    <property type="match status" value="2"/>
</dbReference>
<dbReference type="InterPro" id="IPR027417">
    <property type="entry name" value="P-loop_NTPase"/>
</dbReference>
<dbReference type="InterPro" id="IPR038729">
    <property type="entry name" value="Rad50/SbcC_AAA"/>
</dbReference>
<dbReference type="InterPro" id="IPR053380">
    <property type="entry name" value="SbcCD_Nuclease_C"/>
</dbReference>
<dbReference type="NCBIfam" id="NF041751">
    <property type="entry name" value="sbcc_Staph"/>
    <property type="match status" value="1"/>
</dbReference>
<dbReference type="PANTHER" id="PTHR32114">
    <property type="entry name" value="ABC TRANSPORTER ABCH.3"/>
    <property type="match status" value="1"/>
</dbReference>
<dbReference type="PANTHER" id="PTHR32114:SF2">
    <property type="entry name" value="ABC TRANSPORTER ABCH.3"/>
    <property type="match status" value="1"/>
</dbReference>
<dbReference type="Pfam" id="PF13476">
    <property type="entry name" value="AAA_23"/>
    <property type="match status" value="1"/>
</dbReference>
<dbReference type="Pfam" id="PF13558">
    <property type="entry name" value="SbcC_Walker_B"/>
    <property type="match status" value="1"/>
</dbReference>
<dbReference type="SUPFAM" id="SSF52540">
    <property type="entry name" value="P-loop containing nucleoside triphosphate hydrolases"/>
    <property type="match status" value="2"/>
</dbReference>
<dbReference type="SUPFAM" id="SSF75712">
    <property type="entry name" value="Rad50 coiled-coil Zn hook"/>
    <property type="match status" value="1"/>
</dbReference>
<protein>
    <recommendedName>
        <fullName>Nuclease SbcCD subunit C</fullName>
    </recommendedName>
</protein>
<evidence type="ECO:0000250" key="1"/>
<evidence type="ECO:0000255" key="2"/>
<evidence type="ECO:0000305" key="3"/>
<proteinExistence type="inferred from homology"/>
<reference key="1">
    <citation type="journal article" date="2001" name="Lancet">
        <title>Whole genome sequencing of meticillin-resistant Staphylococcus aureus.</title>
        <authorList>
            <person name="Kuroda M."/>
            <person name="Ohta T."/>
            <person name="Uchiyama I."/>
            <person name="Baba T."/>
            <person name="Yuzawa H."/>
            <person name="Kobayashi I."/>
            <person name="Cui L."/>
            <person name="Oguchi A."/>
            <person name="Aoki K."/>
            <person name="Nagai Y."/>
            <person name="Lian J.-Q."/>
            <person name="Ito T."/>
            <person name="Kanamori M."/>
            <person name="Matsumaru H."/>
            <person name="Maruyama A."/>
            <person name="Murakami H."/>
            <person name="Hosoyama A."/>
            <person name="Mizutani-Ui Y."/>
            <person name="Takahashi N.K."/>
            <person name="Sawano T."/>
            <person name="Inoue R."/>
            <person name="Kaito C."/>
            <person name="Sekimizu K."/>
            <person name="Hirakawa H."/>
            <person name="Kuhara S."/>
            <person name="Goto S."/>
            <person name="Yabuzaki J."/>
            <person name="Kanehisa M."/>
            <person name="Yamashita A."/>
            <person name="Oshima K."/>
            <person name="Furuya K."/>
            <person name="Yoshino C."/>
            <person name="Shiba T."/>
            <person name="Hattori M."/>
            <person name="Ogasawara N."/>
            <person name="Hayashi H."/>
            <person name="Hiramatsu K."/>
        </authorList>
    </citation>
    <scope>NUCLEOTIDE SEQUENCE [LARGE SCALE GENOMIC DNA]</scope>
    <source>
        <strain>Mu50 / ATCC 700699</strain>
    </source>
</reference>
<keyword id="KW-0067">ATP-binding</keyword>
<keyword id="KW-0175">Coiled coil</keyword>
<keyword id="KW-0233">DNA recombination</keyword>
<keyword id="KW-0235">DNA replication</keyword>
<keyword id="KW-0255">Endonuclease</keyword>
<keyword id="KW-0269">Exonuclease</keyword>
<keyword id="KW-0378">Hydrolase</keyword>
<keyword id="KW-0540">Nuclease</keyword>
<keyword id="KW-0547">Nucleotide-binding</keyword>
<organism>
    <name type="scientific">Staphylococcus aureus (strain Mu50 / ATCC 700699)</name>
    <dbReference type="NCBI Taxonomy" id="158878"/>
    <lineage>
        <taxon>Bacteria</taxon>
        <taxon>Bacillati</taxon>
        <taxon>Bacillota</taxon>
        <taxon>Bacilli</taxon>
        <taxon>Bacillales</taxon>
        <taxon>Staphylococcaceae</taxon>
        <taxon>Staphylococcus</taxon>
    </lineage>
</organism>
<sequence length="1009" mass="117482">MKPLHLKLNNFGPFLKEEIDFSKIDNNELFLISGKTGSGKTMIFDAMTYALFGKASTEQREENDLRSHFADGKQPMSVTFEFQLNHRIYKVHRQGPYIKEGNTTKTNAKFDVFEMVDGKYEIRESKVISGTQFIIELLGVNADQFRQLFILPQGEFKRFLISNSREKQGILRTLFDSEKFEAIREILKEELKKEKAQIENRYQQIDLLWQEIESFDDDKIKGLLELATQQIDKLIENIPLLQARSKEILAFVNESKETAIKEYEIIEKKTLENNILKDNINQLNKNKIDFVQLKEQQPEIDEIEAKLKLLQDITNLLNYIENREKIETKIANSKKDISKTNNKILNLDCDKRNIDKEKKMLEENGDLIESKTSFIDKTRVLFNDINKYQQSYLNIECLITEGEQLGDELNNLIKGLEKVEDSIGNNESDYEKIIELNNAITNINNEINIIKENEKAKAELDKLLGSKQELENQINEETTIMKNLEIKLDHYDKSKLDLNDKESFISEIKSAVKIGDQCPICGNEIQDLGHHIDFDSIAKRQNEIKEIEANIHAIKSNIAVHNSEIKFVNEKISNINIKTQSDFSLEVLNKRLLENENALNNQRDLNKFIEQMKEEKDNLTLQIHNKQLRLNKNESELKLCRDLITEFETLSKYNNITNFEVDYKKYVQDVNQHQELSKEIEDKLMQLSQRKLIEQNNLNHYENQLETYNNDLELNEQSIEMEMSRLNLTDDNDINEIIAWRGEQEELEQKRDTYKKRYHEFEMEIARLESLTKDKELLDSDKLKDEYEQKKEKMNTLIDEYSAVHYQCQNNINKTQSIVSHINYLNQELKDQQEIFQLAEIVSGKNNKNLTLENFVLIYYLDQIIAQANLRLATMSDNRYQLIRREAVSHGLSGLEIDVFDLHSNKSRHISSLSGGETFQSSLALALGLSEIVQQQSGGISLESIFIDEGFGTLDQETLETALDTLLNLKSTGRMVGIISHVSELKNRIPLVLEVKSDQYQSSTRFKRN</sequence>
<name>SBCC_STAAM</name>
<feature type="chain" id="PRO_0000338467" description="Nuclease SbcCD subunit C">
    <location>
        <begin position="1"/>
        <end position="1009"/>
    </location>
</feature>
<feature type="coiled-coil region" evidence="2">
    <location>
        <begin position="176"/>
        <end position="364"/>
    </location>
</feature>
<feature type="coiled-coil region" evidence="2">
    <location>
        <begin position="401"/>
        <end position="501"/>
    </location>
</feature>
<feature type="coiled-coil region" evidence="2">
    <location>
        <begin position="535"/>
        <end position="805"/>
    </location>
</feature>
<feature type="binding site" evidence="2">
    <location>
        <begin position="34"/>
        <end position="41"/>
    </location>
    <ligand>
        <name>ATP</name>
        <dbReference type="ChEBI" id="CHEBI:30616"/>
    </ligand>
</feature>